<gene>
    <name type="primary">flaA1a</name>
    <name type="ordered locus">VNG_1008G</name>
</gene>
<dbReference type="EMBL" id="M19883">
    <property type="protein sequence ID" value="AAA72641.1"/>
    <property type="molecule type" value="Genomic_DNA"/>
</dbReference>
<dbReference type="EMBL" id="AE004437">
    <property type="protein sequence ID" value="AAG19424.1"/>
    <property type="molecule type" value="Genomic_DNA"/>
</dbReference>
<dbReference type="PIR" id="A28944">
    <property type="entry name" value="A28944"/>
</dbReference>
<dbReference type="PIR" id="D84257">
    <property type="entry name" value="D84257"/>
</dbReference>
<dbReference type="RefSeq" id="WP_010902719.1">
    <property type="nucleotide sequence ID" value="NC_002607.1"/>
</dbReference>
<dbReference type="SMR" id="P61118"/>
<dbReference type="FunCoup" id="P61118">
    <property type="interactions" value="2"/>
</dbReference>
<dbReference type="STRING" id="64091.VNG_1008G"/>
<dbReference type="PaxDb" id="64091-VNG_1008G"/>
<dbReference type="KEGG" id="hal:VNG_1008G"/>
<dbReference type="PATRIC" id="fig|64091.14.peg.771"/>
<dbReference type="HOGENOM" id="CLU_051124_1_0_2"/>
<dbReference type="InParanoid" id="P61118"/>
<dbReference type="OrthoDB" id="102632at2157"/>
<dbReference type="PhylomeDB" id="P61118"/>
<dbReference type="Proteomes" id="UP000000554">
    <property type="component" value="Chromosome"/>
</dbReference>
<dbReference type="GO" id="GO:0097589">
    <property type="term" value="C:archaeal-type flagellum"/>
    <property type="evidence" value="ECO:0007669"/>
    <property type="project" value="UniProtKB-SubCell"/>
</dbReference>
<dbReference type="GO" id="GO:0005198">
    <property type="term" value="F:structural molecule activity"/>
    <property type="evidence" value="ECO:0007669"/>
    <property type="project" value="InterPro"/>
</dbReference>
<dbReference type="GO" id="GO:0097588">
    <property type="term" value="P:archaeal or bacterial-type flagellum-dependent cell motility"/>
    <property type="evidence" value="ECO:0007669"/>
    <property type="project" value="InterPro"/>
</dbReference>
<dbReference type="InterPro" id="IPR013373">
    <property type="entry name" value="Flagellin/pilin_N_arc"/>
</dbReference>
<dbReference type="InterPro" id="IPR002774">
    <property type="entry name" value="Flagellin_arc"/>
</dbReference>
<dbReference type="NCBIfam" id="TIGR02537">
    <property type="entry name" value="arch_flag_Nterm"/>
    <property type="match status" value="1"/>
</dbReference>
<dbReference type="PANTHER" id="PTHR35903">
    <property type="entry name" value="FLAGELLIN B1"/>
    <property type="match status" value="1"/>
</dbReference>
<dbReference type="PANTHER" id="PTHR35903:SF1">
    <property type="entry name" value="FLAGELLIN B1"/>
    <property type="match status" value="1"/>
</dbReference>
<dbReference type="Pfam" id="PF01917">
    <property type="entry name" value="Arch_flagellin"/>
    <property type="match status" value="1"/>
</dbReference>
<protein>
    <recommendedName>
        <fullName>Flagellin A1</fullName>
    </recommendedName>
</protein>
<reference key="1">
    <citation type="journal article" date="1988" name="J. Biol. Chem.">
        <title>Halobacterial flagellins are encoded by a multigene family. Characterization of five flagellin genes.</title>
        <authorList>
            <person name="Gerl L."/>
            <person name="Sumper M."/>
        </authorList>
    </citation>
    <scope>NUCLEOTIDE SEQUENCE [GENOMIC DNA]</scope>
</reference>
<reference key="2">
    <citation type="journal article" date="2000" name="Proc. Natl. Acad. Sci. U.S.A.">
        <title>Genome sequence of Halobacterium species NRC-1.</title>
        <authorList>
            <person name="Ng W.V."/>
            <person name="Kennedy S.P."/>
            <person name="Mahairas G.G."/>
            <person name="Berquist B."/>
            <person name="Pan M."/>
            <person name="Shukla H.D."/>
            <person name="Lasky S.R."/>
            <person name="Baliga N.S."/>
            <person name="Thorsson V."/>
            <person name="Sbrogna J."/>
            <person name="Swartzell S."/>
            <person name="Weir D."/>
            <person name="Hall J."/>
            <person name="Dahl T.A."/>
            <person name="Welti R."/>
            <person name="Goo Y.A."/>
            <person name="Leithauser B."/>
            <person name="Keller K."/>
            <person name="Cruz R."/>
            <person name="Danson M.J."/>
            <person name="Hough D.W."/>
            <person name="Maddocks D.G."/>
            <person name="Jablonski P.E."/>
            <person name="Krebs M.P."/>
            <person name="Angevine C.M."/>
            <person name="Dale H."/>
            <person name="Isenbarger T.A."/>
            <person name="Peck R.F."/>
            <person name="Pohlschroder M."/>
            <person name="Spudich J.L."/>
            <person name="Jung K.-H."/>
            <person name="Alam M."/>
            <person name="Freitas T."/>
            <person name="Hou S."/>
            <person name="Daniels C.J."/>
            <person name="Dennis P.P."/>
            <person name="Omer A.D."/>
            <person name="Ebhardt H."/>
            <person name="Lowe T.M."/>
            <person name="Liang P."/>
            <person name="Riley M."/>
            <person name="Hood L."/>
            <person name="DasSarma S."/>
        </authorList>
    </citation>
    <scope>NUCLEOTIDE SEQUENCE [LARGE SCALE GENOMIC DNA]</scope>
    <source>
        <strain>ATCC 700922 / JCM 11081 / NRC-1</strain>
    </source>
</reference>
<proteinExistence type="inferred from homology"/>
<organism>
    <name type="scientific">Halobacterium salinarum (strain ATCC 700922 / JCM 11081 / NRC-1)</name>
    <name type="common">Halobacterium halobium</name>
    <dbReference type="NCBI Taxonomy" id="64091"/>
    <lineage>
        <taxon>Archaea</taxon>
        <taxon>Methanobacteriati</taxon>
        <taxon>Methanobacteriota</taxon>
        <taxon>Stenosarchaea group</taxon>
        <taxon>Halobacteria</taxon>
        <taxon>Halobacteriales</taxon>
        <taxon>Halobacteriaceae</taxon>
        <taxon>Halobacterium</taxon>
        <taxon>Halobacterium salinarum NRC-34001</taxon>
    </lineage>
</organism>
<keyword id="KW-0974">Archaeal flagellum</keyword>
<keyword id="KW-0325">Glycoprotein</keyword>
<keyword id="KW-1185">Reference proteome</keyword>
<evidence type="ECO:0000255" key="1"/>
<evidence type="ECO:0000305" key="2"/>
<name>FLAA1_HALSA</name>
<sequence>MFEFITDEDERGQVGIGTLIVFIAMVLVAAIAAGVLINTAGFLQSKGSATGEEASAQVSNRINIVSAYGNVKTASGTDTVDYANLTVRQAAGADNINLSKSTIQWIGPDTATTLTYDGSTADAENFTTESIKGNNADVLVEQSDRIKIVMDAASITTNGLKAGEEVQLTVTTQYGSKTTYWANVPESLKDKNAVTL</sequence>
<feature type="propeptide" id="PRO_0000009363" evidence="1">
    <location>
        <begin position="1"/>
        <end position="12"/>
    </location>
</feature>
<feature type="chain" id="PRO_0000009364" description="Flagellin A1">
    <location>
        <begin position="13"/>
        <end position="196"/>
    </location>
</feature>
<comment type="function">
    <text>Flagellin is the subunit protein which polymerizes to form the filaments of archaeal flagella.</text>
</comment>
<comment type="subcellular location">
    <subcellularLocation>
        <location>Archaeal flagellum</location>
    </subcellularLocation>
</comment>
<comment type="PTM">
    <text>Glycosylated.</text>
</comment>
<comment type="similarity">
    <text evidence="2">Belongs to the archaeal flagellin family.</text>
</comment>
<accession>P61118</accession>
<accession>P13074</accession>
<accession>P61119</accession>
<accession>Q9HQT9</accession>